<gene>
    <name type="primary">NAP1</name>
    <name type="ordered locus">CAALFM_CR00320CA</name>
    <name type="ORF">orf19.7501</name>
</gene>
<organism>
    <name type="scientific">Candida albicans (strain SC5314 / ATCC MYA-2876)</name>
    <name type="common">Yeast</name>
    <dbReference type="NCBI Taxonomy" id="237561"/>
    <lineage>
        <taxon>Eukaryota</taxon>
        <taxon>Fungi</taxon>
        <taxon>Dikarya</taxon>
        <taxon>Ascomycota</taxon>
        <taxon>Saccharomycotina</taxon>
        <taxon>Pichiomycetes</taxon>
        <taxon>Debaryomycetaceae</taxon>
        <taxon>Candida/Lodderomyces clade</taxon>
        <taxon>Candida</taxon>
    </lineage>
</organism>
<protein>
    <recommendedName>
        <fullName evidence="4">Nucleosome assembly protein 1</fullName>
    </recommendedName>
</protein>
<reference key="1">
    <citation type="journal article" date="2004" name="Proc. Natl. Acad. Sci. U.S.A.">
        <title>The diploid genome sequence of Candida albicans.</title>
        <authorList>
            <person name="Jones T."/>
            <person name="Federspiel N.A."/>
            <person name="Chibana H."/>
            <person name="Dungan J."/>
            <person name="Kalman S."/>
            <person name="Magee B.B."/>
            <person name="Newport G."/>
            <person name="Thorstenson Y.R."/>
            <person name="Agabian N."/>
            <person name="Magee P.T."/>
            <person name="Davis R.W."/>
            <person name="Scherer S."/>
        </authorList>
    </citation>
    <scope>NUCLEOTIDE SEQUENCE [LARGE SCALE GENOMIC DNA]</scope>
    <source>
        <strain>SC5314 / ATCC MYA-2876</strain>
    </source>
</reference>
<reference key="2">
    <citation type="journal article" date="2007" name="Genome Biol.">
        <title>Assembly of the Candida albicans genome into sixteen supercontigs aligned on the eight chromosomes.</title>
        <authorList>
            <person name="van het Hoog M."/>
            <person name="Rast T.J."/>
            <person name="Martchenko M."/>
            <person name="Grindle S."/>
            <person name="Dignard D."/>
            <person name="Hogues H."/>
            <person name="Cuomo C."/>
            <person name="Berriman M."/>
            <person name="Scherer S."/>
            <person name="Magee B.B."/>
            <person name="Whiteway M."/>
            <person name="Chibana H."/>
            <person name="Nantel A."/>
            <person name="Magee P.T."/>
        </authorList>
    </citation>
    <scope>GENOME REANNOTATION</scope>
    <source>
        <strain>SC5314 / ATCC MYA-2876</strain>
    </source>
</reference>
<reference key="3">
    <citation type="journal article" date="2013" name="Genome Biol.">
        <title>Assembly of a phased diploid Candida albicans genome facilitates allele-specific measurements and provides a simple model for repeat and indel structure.</title>
        <authorList>
            <person name="Muzzey D."/>
            <person name="Schwartz K."/>
            <person name="Weissman J.S."/>
            <person name="Sherlock G."/>
        </authorList>
    </citation>
    <scope>NUCLEOTIDE SEQUENCE [LARGE SCALE GENOMIC DNA]</scope>
    <scope>GENOME REANNOTATION</scope>
    <source>
        <strain>SC5314 / ATCC MYA-2876</strain>
    </source>
</reference>
<reference key="4">
    <citation type="journal article" date="2008" name="Int. J. Med. Microbiol.">
        <title>A proteomic view of Candida albicans yeast cell metabolism in exponential and stationary growth phases.</title>
        <authorList>
            <person name="Kusch H."/>
            <person name="Engelmann S."/>
            <person name="Bode R."/>
            <person name="Albrecht D."/>
            <person name="Morschhauser J."/>
            <person name="Hecker M."/>
        </authorList>
    </citation>
    <scope>IDENTIFICATION BY MASS SPECTROMETRY</scope>
</reference>
<reference key="5">
    <citation type="journal article" date="2014" name="MBio">
        <title>Phosphoregulation of Nap1 plays a role in septin ring dynamics and morphogenesis in Candida albicans.</title>
        <authorList>
            <person name="Huang Z.X."/>
            <person name="Zhao P."/>
            <person name="Zeng G.S."/>
            <person name="Wang Y.M."/>
            <person name="Sudbery I."/>
            <person name="Wang Y."/>
        </authorList>
    </citation>
    <scope>DISRUPTION PHENOTYPE</scope>
    <scope>SUBCELLULAR LOCATION</scope>
    <scope>FUNCTION</scope>
    <scope>PHOSPHORYLATION AT SER-16; THR-20; THR-24; SER-27; THR-29; SER-31; SER-35; THR-42; SER-46 AND THR-52</scope>
</reference>
<dbReference type="EMBL" id="CP017630">
    <property type="protein sequence ID" value="AOW30803.1"/>
    <property type="molecule type" value="Genomic_DNA"/>
</dbReference>
<dbReference type="RefSeq" id="XP_718658.1">
    <property type="nucleotide sequence ID" value="XM_713565.1"/>
</dbReference>
<dbReference type="SMR" id="Q5AAI8"/>
<dbReference type="FunCoup" id="Q5AAI8">
    <property type="interactions" value="1747"/>
</dbReference>
<dbReference type="STRING" id="237561.Q5AAI8"/>
<dbReference type="iPTMnet" id="Q5AAI8"/>
<dbReference type="EnsemblFungi" id="CR_00320C_A-T">
    <property type="protein sequence ID" value="CR_00320C_A-T-p1"/>
    <property type="gene ID" value="CR_00320C_A"/>
</dbReference>
<dbReference type="GeneID" id="3639714"/>
<dbReference type="KEGG" id="cal:CAALFM_CR00320CA"/>
<dbReference type="CGD" id="CAL0000200763">
    <property type="gene designation" value="NAP1"/>
</dbReference>
<dbReference type="VEuPathDB" id="FungiDB:CR_00320C_A"/>
<dbReference type="eggNOG" id="KOG1507">
    <property type="taxonomic scope" value="Eukaryota"/>
</dbReference>
<dbReference type="HOGENOM" id="CLU_038841_1_0_1"/>
<dbReference type="InParanoid" id="Q5AAI8"/>
<dbReference type="OMA" id="YSGDFMY"/>
<dbReference type="OrthoDB" id="27325at2759"/>
<dbReference type="PHI-base" id="PHI:4045"/>
<dbReference type="Proteomes" id="UP000000559">
    <property type="component" value="Chromosome R"/>
</dbReference>
<dbReference type="GO" id="GO:0032174">
    <property type="term" value="C:cellular bud neck septin collar"/>
    <property type="evidence" value="ECO:0007669"/>
    <property type="project" value="EnsemblFungi"/>
</dbReference>
<dbReference type="GO" id="GO:0005934">
    <property type="term" value="C:cellular bud tip"/>
    <property type="evidence" value="ECO:0007669"/>
    <property type="project" value="UniProtKB-SubCell"/>
</dbReference>
<dbReference type="GO" id="GO:0000785">
    <property type="term" value="C:chromatin"/>
    <property type="evidence" value="ECO:0000318"/>
    <property type="project" value="GO_Central"/>
</dbReference>
<dbReference type="GO" id="GO:1990317">
    <property type="term" value="C:Gin4 complex"/>
    <property type="evidence" value="ECO:0007669"/>
    <property type="project" value="EnsemblFungi"/>
</dbReference>
<dbReference type="GO" id="GO:0032168">
    <property type="term" value="C:hyphal septin ring"/>
    <property type="evidence" value="ECO:0000314"/>
    <property type="project" value="CGD"/>
</dbReference>
<dbReference type="GO" id="GO:0005634">
    <property type="term" value="C:nucleus"/>
    <property type="evidence" value="ECO:0000318"/>
    <property type="project" value="GO_Central"/>
</dbReference>
<dbReference type="GO" id="GO:0003682">
    <property type="term" value="F:chromatin binding"/>
    <property type="evidence" value="ECO:0000318"/>
    <property type="project" value="GO_Central"/>
</dbReference>
<dbReference type="GO" id="GO:0030332">
    <property type="term" value="F:cyclin binding"/>
    <property type="evidence" value="ECO:0007669"/>
    <property type="project" value="EnsemblFungi"/>
</dbReference>
<dbReference type="GO" id="GO:0008047">
    <property type="term" value="F:enzyme activator activity"/>
    <property type="evidence" value="ECO:0007669"/>
    <property type="project" value="EnsemblFungi"/>
</dbReference>
<dbReference type="GO" id="GO:0042393">
    <property type="term" value="F:histone binding"/>
    <property type="evidence" value="ECO:0000318"/>
    <property type="project" value="GO_Central"/>
</dbReference>
<dbReference type="GO" id="GO:0042802">
    <property type="term" value="F:identical protein binding"/>
    <property type="evidence" value="ECO:0007669"/>
    <property type="project" value="EnsemblFungi"/>
</dbReference>
<dbReference type="GO" id="GO:0051082">
    <property type="term" value="F:unfolded protein binding"/>
    <property type="evidence" value="ECO:0007669"/>
    <property type="project" value="EnsemblFungi"/>
</dbReference>
<dbReference type="GO" id="GO:0007117">
    <property type="term" value="P:budding cell bud growth"/>
    <property type="evidence" value="ECO:0007669"/>
    <property type="project" value="EnsemblFungi"/>
</dbReference>
<dbReference type="GO" id="GO:0030448">
    <property type="term" value="P:hyphal growth"/>
    <property type="evidence" value="ECO:0000315"/>
    <property type="project" value="CGD"/>
</dbReference>
<dbReference type="GO" id="GO:0006607">
    <property type="term" value="P:NLS-bearing protein import into nucleus"/>
    <property type="evidence" value="ECO:0007669"/>
    <property type="project" value="EnsemblFungi"/>
</dbReference>
<dbReference type="GO" id="GO:0006334">
    <property type="term" value="P:nucleosome assembly"/>
    <property type="evidence" value="ECO:0000318"/>
    <property type="project" value="GO_Central"/>
</dbReference>
<dbReference type="GO" id="GO:0006337">
    <property type="term" value="P:nucleosome disassembly"/>
    <property type="evidence" value="ECO:0007669"/>
    <property type="project" value="EnsemblFungi"/>
</dbReference>
<dbReference type="GO" id="GO:0031116">
    <property type="term" value="P:positive regulation of microtubule polymerization"/>
    <property type="evidence" value="ECO:0007669"/>
    <property type="project" value="EnsemblFungi"/>
</dbReference>
<dbReference type="GO" id="GO:0032968">
    <property type="term" value="P:positive regulation of transcription elongation by RNA polymerase II"/>
    <property type="evidence" value="ECO:0007669"/>
    <property type="project" value="EnsemblFungi"/>
</dbReference>
<dbReference type="GO" id="GO:0098841">
    <property type="term" value="P:protein localization to cell division site after cytokinesis"/>
    <property type="evidence" value="ECO:0007669"/>
    <property type="project" value="EnsemblFungi"/>
</dbReference>
<dbReference type="GO" id="GO:0042274">
    <property type="term" value="P:ribosomal small subunit biogenesis"/>
    <property type="evidence" value="ECO:0007669"/>
    <property type="project" value="EnsemblFungi"/>
</dbReference>
<dbReference type="FunFam" id="3.30.1120.90:FF:000003">
    <property type="entry name" value="Nucleosome assembly protein"/>
    <property type="match status" value="1"/>
</dbReference>
<dbReference type="FunFam" id="1.20.5.1500:FF:000001">
    <property type="entry name" value="Nucleosome assembly protein 1-like 1"/>
    <property type="match status" value="1"/>
</dbReference>
<dbReference type="Gene3D" id="1.20.5.1500">
    <property type="match status" value="1"/>
</dbReference>
<dbReference type="Gene3D" id="3.30.1120.90">
    <property type="entry name" value="Nucleosome assembly protein"/>
    <property type="match status" value="1"/>
</dbReference>
<dbReference type="InterPro" id="IPR037231">
    <property type="entry name" value="NAP-like_sf"/>
</dbReference>
<dbReference type="InterPro" id="IPR002164">
    <property type="entry name" value="NAP_family"/>
</dbReference>
<dbReference type="PANTHER" id="PTHR11875">
    <property type="entry name" value="TESTIS-SPECIFIC Y-ENCODED PROTEIN"/>
    <property type="match status" value="1"/>
</dbReference>
<dbReference type="Pfam" id="PF00956">
    <property type="entry name" value="NAP"/>
    <property type="match status" value="1"/>
</dbReference>
<dbReference type="SUPFAM" id="SSF143113">
    <property type="entry name" value="NAP-like"/>
    <property type="match status" value="1"/>
</dbReference>
<proteinExistence type="evidence at protein level"/>
<feature type="chain" id="PRO_0000431680" description="Nucleosome assembly protein 1">
    <location>
        <begin position="1"/>
        <end position="435"/>
    </location>
</feature>
<feature type="region of interest" description="Disordered" evidence="2">
    <location>
        <begin position="1"/>
        <end position="51"/>
    </location>
</feature>
<feature type="region of interest" description="Disordered" evidence="2">
    <location>
        <begin position="146"/>
        <end position="187"/>
    </location>
</feature>
<feature type="region of interest" description="Disordered" evidence="2">
    <location>
        <begin position="308"/>
        <end position="435"/>
    </location>
</feature>
<feature type="compositionally biased region" description="Polar residues" evidence="2">
    <location>
        <begin position="19"/>
        <end position="50"/>
    </location>
</feature>
<feature type="compositionally biased region" description="Acidic residues" evidence="2">
    <location>
        <begin position="146"/>
        <end position="185"/>
    </location>
</feature>
<feature type="compositionally biased region" description="Acidic residues" evidence="2">
    <location>
        <begin position="338"/>
        <end position="355"/>
    </location>
</feature>
<feature type="compositionally biased region" description="Basic and acidic residues" evidence="2">
    <location>
        <begin position="356"/>
        <end position="374"/>
    </location>
</feature>
<feature type="compositionally biased region" description="Acidic residues" evidence="2">
    <location>
        <begin position="386"/>
        <end position="421"/>
    </location>
</feature>
<feature type="modified residue" description="Phosphoserine" evidence="3">
    <location>
        <position position="16"/>
    </location>
</feature>
<feature type="modified residue" description="Phosphothreonine" evidence="3">
    <location>
        <position position="20"/>
    </location>
</feature>
<feature type="modified residue" description="Phosphothreonine" evidence="3">
    <location>
        <position position="24"/>
    </location>
</feature>
<feature type="modified residue" description="Phosphoserine" evidence="3">
    <location>
        <position position="27"/>
    </location>
</feature>
<feature type="modified residue" description="Phosphothreonine" evidence="3">
    <location>
        <position position="29"/>
    </location>
</feature>
<feature type="modified residue" description="Phosphoserine" evidence="3">
    <location>
        <position position="31"/>
    </location>
</feature>
<feature type="modified residue" description="Phosphoserine" evidence="3">
    <location>
        <position position="35"/>
    </location>
</feature>
<feature type="modified residue" description="Phosphothreonine" evidence="3">
    <location>
        <position position="42"/>
    </location>
</feature>
<feature type="modified residue" description="Phosphoserine" evidence="3">
    <location>
        <position position="46"/>
    </location>
</feature>
<feature type="modified residue" description="Phosphothreonine" evidence="3">
    <location>
        <position position="52"/>
    </location>
</feature>
<keyword id="KW-0597">Phosphoprotein</keyword>
<keyword id="KW-1185">Reference proteome</keyword>
<accession>Q5AAI8</accession>
<accession>A0A1D8PRQ7</accession>
<sequence length="435" mass="49517">MTEQPINTKKKNGDISKAPTPQNTPASVTNSYMRSKPPTVSTIQESNNEDGTGAAAAAGGLANNPVLLSMIQGKLGDLVGKQSGYIDNLSKPVKNRVYGLKSLQLNQMKLEAQFQKELLELEKKFFAKYQPLYVKRKQIINGELEPTVEEIEEGQQLEEEEKGIDKEDGEEEEEEEEDDEEEDEQGIPGFWLTALENLSTVSETITDRDSEVLSNLIDIRMEYLSTPGFQLIFEFKPNDFFENQTLTKTYHYQAELGYSGDFVYDHADGCEIRWKSKENNVTITIERRKQRNKTTKQTRTIEKLTPTESFFNFFDPPKPPKIKSEDDDNDDKLQDKEEANDDDEGEEGDEEDEELEARLELDYQLGEEIKDRLIPRAIDWFTGDAVDFDYPELEGEGDEDEYSDEDGEGDSDDDDDDDDEAAGSQKQPPPECKQQ</sequence>
<comment type="function">
    <text evidence="1 3">Acidic protein, which assembles histones into an octamer (By similarity). Involved in the regulation of the localization and the function of the septins during mitosis.</text>
</comment>
<comment type="subunit">
    <text evidence="1">Component of the GIN4 complex which forms a ring at the bud neck.</text>
</comment>
<comment type="subcellular location">
    <subcellularLocation>
        <location evidence="3">Bud neck</location>
    </subcellularLocation>
    <subcellularLocation>
        <location evidence="3">Bud tip</location>
    </subcellularLocation>
    <text evidence="3">Has not been detected in the nucleus.</text>
</comment>
<comment type="PTM">
    <text evidence="3">Phosphorylation is cell cycle dependent and is important for its bud neck localization. Phosphorylation is highest in newly collected G1 cells, declines when the cells are traversing through the G1 phase, and reaches the lowest level around the time of bud emergence. Phosphorylation increases and remains high through the rest of the cell cycle until the beginning of the next one, when it decreases again. Phosphorylation involves two septin ring-associated kinases, CLA4 and GIN4, and its dephosphorylation occurs at the septin ring in a manner dependent on the phosphatases PP2A and CDC14.</text>
</comment>
<comment type="disruption phenotype">
    <text evidence="3">Leads to constitutive filamentous growth and abnormalities in both septin localization and organization. Exhibits greatly reduced virulence in a mouse model of systemic candidiasis.</text>
</comment>
<comment type="similarity">
    <text evidence="4">Belongs to the nucleosome assembly protein (NAP) family.</text>
</comment>
<name>NAP1_CANAL</name>
<evidence type="ECO:0000250" key="1">
    <source>
        <dbReference type="UniProtKB" id="P25293"/>
    </source>
</evidence>
<evidence type="ECO:0000256" key="2">
    <source>
        <dbReference type="SAM" id="MobiDB-lite"/>
    </source>
</evidence>
<evidence type="ECO:0000269" key="3">
    <source>
    </source>
</evidence>
<evidence type="ECO:0000305" key="4"/>